<dbReference type="EMBL" id="AF322977">
    <property type="protein sequence ID" value="ABG36588.1"/>
    <property type="molecule type" value="Genomic_DNA"/>
</dbReference>
<dbReference type="RefSeq" id="YP_007969779.1">
    <property type="nucleotide sequence ID" value="NC_020474.2"/>
</dbReference>
<dbReference type="SMR" id="Q18LD1"/>
<dbReference type="GeneID" id="15486203"/>
<dbReference type="KEGG" id="vg:15486203"/>
<dbReference type="InterPro" id="IPR022614">
    <property type="entry name" value="Herpesvirus_UL96"/>
</dbReference>
<dbReference type="Pfam" id="PF10867">
    <property type="entry name" value="DUF2664"/>
    <property type="match status" value="1"/>
</dbReference>
<name>UL96_ELHVK</name>
<proteinExistence type="inferred from homology"/>
<protein>
    <recommendedName>
        <fullName>Protein U68</fullName>
    </recommendedName>
</protein>
<evidence type="ECO:0000305" key="1"/>
<organismHost>
    <name type="scientific">Elephas maximus</name>
    <name type="common">Indian elephant</name>
    <dbReference type="NCBI Taxonomy" id="9783"/>
</organismHost>
<organismHost>
    <name type="scientific">Loxodonta africana</name>
    <name type="common">African elephant</name>
    <dbReference type="NCBI Taxonomy" id="9785"/>
</organismHost>
<organismHost>
    <name type="scientific">Loxodonta cyclotis</name>
    <name type="common">African forest elephant</name>
    <dbReference type="NCBI Taxonomy" id="99490"/>
</organismHost>
<sequence length="122" mass="13889">MTSPHNHMAYLKHHVLMTVDADHHRSLRTRLGTQHVLTKIQGIKTKESHGAFQFAEDKARLEAVSRSILLKRARTNKNKNALKEINVEKVDSILVTSEAVHDDIDEIYHATIEDECGILNQD</sequence>
<reference key="1">
    <citation type="journal article" date="2007" name="J. Virol.">
        <title>Identification of novel rodent herpesviruses, including the first gammaherpesvirus of Mus musculus.</title>
        <authorList>
            <person name="Ehlers B."/>
            <person name="Kuchler J."/>
            <person name="Yasmum N."/>
            <person name="Dural G."/>
            <person name="Voigt S."/>
            <person name="Schmidt-Chanasit J."/>
            <person name="Jakel T."/>
            <person name="Matuschka F.R."/>
            <person name="Richter D."/>
            <person name="Essbauer S."/>
            <person name="Hughes D.J."/>
            <person name="Summers C."/>
            <person name="Bennett M."/>
            <person name="Stewart J.P."/>
            <person name="Ulrich R.G."/>
        </authorList>
    </citation>
    <scope>NUCLEOTIDE SEQUENCE [GENOMIC DNA]</scope>
</reference>
<reference key="2">
    <citation type="journal article" date="2001" name="J. Gen. Virol.">
        <title>Genetic and ultrastructural characterization of a European isolate of the fatal endotheliotropic elephant herpesvirus.</title>
        <authorList>
            <person name="Ehlers B."/>
            <person name="Burkhardt S."/>
            <person name="Goltz M."/>
            <person name="Bergmann V."/>
            <person name="Ochs A."/>
            <person name="Weiler H."/>
            <person name="Hentschke J."/>
        </authorList>
    </citation>
    <scope>NUCLEOTIDE SEQUENCE [GENOMIC DNA]</scope>
</reference>
<organism>
    <name type="scientific">Elephantid herpesvirus 1 (isolate Asian elephant/Berlin/Kiba/1998)</name>
    <name type="common">EIHV-1</name>
    <name type="synonym">Elephant endotheliotropic herpesvirus</name>
    <dbReference type="NCBI Taxonomy" id="654902"/>
    <lineage>
        <taxon>Viruses</taxon>
        <taxon>Duplodnaviria</taxon>
        <taxon>Heunggongvirae</taxon>
        <taxon>Peploviricota</taxon>
        <taxon>Herviviricetes</taxon>
        <taxon>Herpesvirales</taxon>
        <taxon>Orthoherpesviridae</taxon>
        <taxon>Betaherpesvirinae</taxon>
        <taxon>Proboscivirus</taxon>
        <taxon>Proboscivirus elephantidbeta1</taxon>
        <taxon>Elephantid herpesvirus 1</taxon>
    </lineage>
</organism>
<feature type="chain" id="PRO_0000408174" description="Protein U68">
    <location>
        <begin position="1"/>
        <end position="122"/>
    </location>
</feature>
<accession>Q18LD1</accession>
<comment type="similarity">
    <text evidence="1">Belongs to the herpesviridae UL96 family.</text>
</comment>